<proteinExistence type="evidence at protein level"/>
<name>PERA_ALOVR</name>
<accession>P84752</accession>
<keyword id="KW-0903">Direct protein sequencing</keyword>
<keyword id="KW-0325">Glycoprotein</keyword>
<keyword id="KW-0376">Hydrogen peroxide</keyword>
<keyword id="KW-0560">Oxidoreductase</keyword>
<keyword id="KW-0575">Peroxidase</keyword>
<keyword id="KW-0964">Secreted</keyword>
<protein>
    <recommendedName>
        <fullName>Peroxidase A</fullName>
        <ecNumber>1.11.1.7</ecNumber>
    </recommendedName>
</protein>
<dbReference type="EC" id="1.11.1.7"/>
<dbReference type="GO" id="GO:0005576">
    <property type="term" value="C:extracellular region"/>
    <property type="evidence" value="ECO:0007669"/>
    <property type="project" value="UniProtKB-SubCell"/>
</dbReference>
<dbReference type="GO" id="GO:0020037">
    <property type="term" value="F:heme binding"/>
    <property type="evidence" value="ECO:0007669"/>
    <property type="project" value="InterPro"/>
</dbReference>
<dbReference type="GO" id="GO:0140825">
    <property type="term" value="F:lactoperoxidase activity"/>
    <property type="evidence" value="ECO:0007669"/>
    <property type="project" value="UniProtKB-EC"/>
</dbReference>
<dbReference type="GO" id="GO:0042744">
    <property type="term" value="P:hydrogen peroxide catabolic process"/>
    <property type="evidence" value="ECO:0007669"/>
    <property type="project" value="UniProtKB-KW"/>
</dbReference>
<dbReference type="GO" id="GO:0006979">
    <property type="term" value="P:response to oxidative stress"/>
    <property type="evidence" value="ECO:0007669"/>
    <property type="project" value="InterPro"/>
</dbReference>
<dbReference type="Gene3D" id="6.10.140.1350">
    <property type="match status" value="1"/>
</dbReference>
<dbReference type="InterPro" id="IPR002016">
    <property type="entry name" value="Haem_peroxidase"/>
</dbReference>
<dbReference type="PROSITE" id="PS50873">
    <property type="entry name" value="PEROXIDASE_4"/>
    <property type="match status" value="1"/>
</dbReference>
<reference evidence="5" key="1">
    <citation type="thesis" date="2005" institute="University of Alcala" country="Spain">
        <title>Peroxidase of Aloe barbadensis m.: characterization and function.</title>
        <authorList>
            <person name="Esteban A."/>
        </authorList>
    </citation>
    <scope>PROTEIN SEQUENCE</scope>
    <scope>CATALYTIC ACTIVITY</scope>
    <scope>GLYCOSYLATION</scope>
    <source>
        <tissue evidence="3">Leaf</tissue>
    </source>
</reference>
<organism>
    <name type="scientific">Aloe vera</name>
    <name type="common">Aloe</name>
    <name type="synonym">Aloe barbadensis</name>
    <dbReference type="NCBI Taxonomy" id="34199"/>
    <lineage>
        <taxon>Eukaryota</taxon>
        <taxon>Viridiplantae</taxon>
        <taxon>Streptophyta</taxon>
        <taxon>Embryophyta</taxon>
        <taxon>Tracheophyta</taxon>
        <taxon>Spermatophyta</taxon>
        <taxon>Magnoliopsida</taxon>
        <taxon>Liliopsida</taxon>
        <taxon>Asparagales</taxon>
        <taxon>Asphodelaceae</taxon>
        <taxon>Asphodeloideae</taxon>
        <taxon>Aloe</taxon>
    </lineage>
</organism>
<comment type="catalytic activity">
    <reaction evidence="3">
        <text>2 a phenolic donor + H2O2 = 2 a phenolic radical donor + 2 H2O</text>
        <dbReference type="Rhea" id="RHEA:56136"/>
        <dbReference type="ChEBI" id="CHEBI:15377"/>
        <dbReference type="ChEBI" id="CHEBI:16240"/>
        <dbReference type="ChEBI" id="CHEBI:139520"/>
        <dbReference type="ChEBI" id="CHEBI:139521"/>
        <dbReference type="EC" id="1.11.1.7"/>
    </reaction>
</comment>
<comment type="subcellular location">
    <subcellularLocation>
        <location evidence="2">Secreted</location>
    </subcellularLocation>
</comment>
<comment type="PTM">
    <text evidence="3">Partially N-glycosylated.</text>
</comment>
<comment type="similarity">
    <text evidence="1">Belongs to the peroxidase family.</text>
</comment>
<comment type="caution">
    <text evidence="5">The order of the peptides shown is unknown.</text>
</comment>
<feature type="chain" id="PRO_0000055601" description="Peroxidase A">
    <location>
        <begin position="1" status="less than"/>
        <end position="361" status="greater than"/>
    </location>
</feature>
<feature type="non-consecutive residues" evidence="4">
    <location>
        <begin position="15"/>
        <end position="16"/>
    </location>
</feature>
<feature type="non-consecutive residues" evidence="4">
    <location>
        <begin position="31"/>
        <end position="32"/>
    </location>
</feature>
<feature type="non-consecutive residues" evidence="4">
    <location>
        <begin position="53"/>
        <end position="54"/>
    </location>
</feature>
<feature type="non-consecutive residues" evidence="4">
    <location>
        <begin position="79"/>
        <end position="80"/>
    </location>
</feature>
<feature type="non-consecutive residues" evidence="4">
    <location>
        <begin position="106"/>
        <end position="107"/>
    </location>
</feature>
<feature type="non-consecutive residues" evidence="4">
    <location>
        <begin position="120"/>
        <end position="121"/>
    </location>
</feature>
<feature type="non-consecutive residues" evidence="4">
    <location>
        <begin position="135"/>
        <end position="136"/>
    </location>
</feature>
<feature type="non-consecutive residues" evidence="4">
    <location>
        <begin position="157"/>
        <end position="158"/>
    </location>
</feature>
<feature type="non-consecutive residues" evidence="4">
    <location>
        <begin position="176"/>
        <end position="177"/>
    </location>
</feature>
<feature type="non-consecutive residues" evidence="4">
    <location>
        <begin position="187"/>
        <end position="188"/>
    </location>
</feature>
<feature type="non-consecutive residues" evidence="4">
    <location>
        <begin position="216"/>
        <end position="217"/>
    </location>
</feature>
<feature type="non-consecutive residues" evidence="4">
    <location>
        <begin position="238"/>
        <end position="239"/>
    </location>
</feature>
<feature type="non-consecutive residues" evidence="4">
    <location>
        <begin position="253"/>
        <end position="254"/>
    </location>
</feature>
<feature type="non-consecutive residues" evidence="4">
    <location>
        <begin position="267"/>
        <end position="268"/>
    </location>
</feature>
<feature type="non-consecutive residues" evidence="4">
    <location>
        <begin position="285"/>
        <end position="286"/>
    </location>
</feature>
<feature type="non-consecutive residues" evidence="4">
    <location>
        <begin position="303"/>
        <end position="304"/>
    </location>
</feature>
<feature type="non-consecutive residues" evidence="4">
    <location>
        <begin position="322"/>
        <end position="323"/>
    </location>
</feature>
<feature type="non-consecutive residues" evidence="4">
    <location>
        <begin position="337"/>
        <end position="338"/>
    </location>
</feature>
<feature type="non-consecutive residues" evidence="4">
    <location>
        <begin position="352"/>
        <end position="353"/>
    </location>
</feature>
<feature type="non-terminal residue" evidence="4">
    <location>
        <position position="1"/>
    </location>
</feature>
<feature type="non-terminal residue" evidence="4">
    <location>
        <position position="361"/>
    </location>
</feature>
<evidence type="ECO:0000255" key="1"/>
<evidence type="ECO:0000255" key="2">
    <source>
        <dbReference type="PROSITE-ProRule" id="PRU00297"/>
    </source>
</evidence>
<evidence type="ECO:0000269" key="3">
    <source ref="1"/>
</evidence>
<evidence type="ECO:0000303" key="4">
    <source ref="1"/>
</evidence>
<evidence type="ECO:0000305" key="5"/>
<sequence length="361" mass="38444">VNQIGSVTESIEAVKAALVSHGAGVAVVGRKINLAGGPSYTVELGRFDGLVSRALYGLSKLPELGTHGLTLICISWALRVMSNVHDFFVHVAAKVESIHQYIESMRYGSLSPTIFDNYSKDCMIAHGAAHFLKXRPPDPAETRGGAVADNGSGAVARMPTLEEYGTNLTKLAEEGKANFDAAMVKLKNFSFILMFGVLGTIISFCLISSGAVLLLKHHVFPDSNINPSSGAAITSGVRGDLRAYVVAYLDPSRTSFTVDNAIYGEIRRTVLAWLIDSGTLQLSEKVLALVLTMVAATVLGVAKSMIKMGQIEVLTGTQGEIRAAEIVVEQLHAESGKPVLVALTGSIDKMTKDNVLNKTCK</sequence>